<dbReference type="EC" id="3.4.24.7"/>
<dbReference type="EMBL" id="X58256">
    <property type="protein sequence ID" value="CAA41210.1"/>
    <property type="molecule type" value="mRNA"/>
</dbReference>
<dbReference type="PIR" id="S14654">
    <property type="entry name" value="KCBOI"/>
</dbReference>
<dbReference type="RefSeq" id="NP_776537.1">
    <property type="nucleotide sequence ID" value="NM_174112.1"/>
</dbReference>
<dbReference type="SMR" id="P28053"/>
<dbReference type="FunCoup" id="P28053">
    <property type="interactions" value="153"/>
</dbReference>
<dbReference type="STRING" id="9913.ENSBTAP00000021014"/>
<dbReference type="MEROPS" id="M10.001"/>
<dbReference type="GlyCosmos" id="P28053">
    <property type="glycosylation" value="1 site, No reported glycans"/>
</dbReference>
<dbReference type="GlyGen" id="P28053">
    <property type="glycosylation" value="1 site"/>
</dbReference>
<dbReference type="PaxDb" id="9913-ENSBTAP00000021014"/>
<dbReference type="GeneID" id="281308"/>
<dbReference type="KEGG" id="bta:281308"/>
<dbReference type="CTD" id="4312"/>
<dbReference type="eggNOG" id="KOG1565">
    <property type="taxonomic scope" value="Eukaryota"/>
</dbReference>
<dbReference type="InParanoid" id="P28053"/>
<dbReference type="OrthoDB" id="406838at2759"/>
<dbReference type="Proteomes" id="UP000009136">
    <property type="component" value="Unplaced"/>
</dbReference>
<dbReference type="GO" id="GO:0031012">
    <property type="term" value="C:extracellular matrix"/>
    <property type="evidence" value="ECO:0007669"/>
    <property type="project" value="InterPro"/>
</dbReference>
<dbReference type="GO" id="GO:0005576">
    <property type="term" value="C:extracellular region"/>
    <property type="evidence" value="ECO:0007669"/>
    <property type="project" value="UniProtKB-KW"/>
</dbReference>
<dbReference type="GO" id="GO:0004222">
    <property type="term" value="F:metalloendopeptidase activity"/>
    <property type="evidence" value="ECO:0000318"/>
    <property type="project" value="GO_Central"/>
</dbReference>
<dbReference type="GO" id="GO:0008233">
    <property type="term" value="F:peptidase activity"/>
    <property type="evidence" value="ECO:0000250"/>
    <property type="project" value="UniProtKB"/>
</dbReference>
<dbReference type="GO" id="GO:0008270">
    <property type="term" value="F:zinc ion binding"/>
    <property type="evidence" value="ECO:0007669"/>
    <property type="project" value="InterPro"/>
</dbReference>
<dbReference type="GO" id="GO:0071492">
    <property type="term" value="P:cellular response to UV-A"/>
    <property type="evidence" value="ECO:0000250"/>
    <property type="project" value="UniProtKB"/>
</dbReference>
<dbReference type="GO" id="GO:0030574">
    <property type="term" value="P:collagen catabolic process"/>
    <property type="evidence" value="ECO:0000318"/>
    <property type="project" value="GO_Central"/>
</dbReference>
<dbReference type="GO" id="GO:0030198">
    <property type="term" value="P:extracellular matrix organization"/>
    <property type="evidence" value="ECO:0000318"/>
    <property type="project" value="GO_Central"/>
</dbReference>
<dbReference type="GO" id="GO:0006508">
    <property type="term" value="P:proteolysis"/>
    <property type="evidence" value="ECO:0007669"/>
    <property type="project" value="UniProtKB-KW"/>
</dbReference>
<dbReference type="CDD" id="cd00094">
    <property type="entry name" value="HX"/>
    <property type="match status" value="1"/>
</dbReference>
<dbReference type="CDD" id="cd04278">
    <property type="entry name" value="ZnMc_MMP"/>
    <property type="match status" value="1"/>
</dbReference>
<dbReference type="FunFam" id="3.40.390.10:FF:000007">
    <property type="entry name" value="Collagenase 3"/>
    <property type="match status" value="1"/>
</dbReference>
<dbReference type="FunFam" id="2.110.10.10:FF:000002">
    <property type="entry name" value="Matrix metallopeptidase 3"/>
    <property type="match status" value="1"/>
</dbReference>
<dbReference type="Gene3D" id="3.40.390.10">
    <property type="entry name" value="Collagenase (Catalytic Domain)"/>
    <property type="match status" value="1"/>
</dbReference>
<dbReference type="Gene3D" id="2.110.10.10">
    <property type="entry name" value="Hemopexin-like domain"/>
    <property type="match status" value="1"/>
</dbReference>
<dbReference type="InterPro" id="IPR000585">
    <property type="entry name" value="Hemopexin-like_dom"/>
</dbReference>
<dbReference type="InterPro" id="IPR036375">
    <property type="entry name" value="Hemopexin-like_dom_sf"/>
</dbReference>
<dbReference type="InterPro" id="IPR018487">
    <property type="entry name" value="Hemopexin-like_repeat"/>
</dbReference>
<dbReference type="InterPro" id="IPR018486">
    <property type="entry name" value="Hemopexin_CS"/>
</dbReference>
<dbReference type="InterPro" id="IPR033739">
    <property type="entry name" value="M10A_MMP"/>
</dbReference>
<dbReference type="InterPro" id="IPR024079">
    <property type="entry name" value="MetalloPept_cat_dom_sf"/>
</dbReference>
<dbReference type="InterPro" id="IPR001818">
    <property type="entry name" value="Pept_M10_metallopeptidase"/>
</dbReference>
<dbReference type="InterPro" id="IPR021190">
    <property type="entry name" value="Pept_M10A"/>
</dbReference>
<dbReference type="InterPro" id="IPR021158">
    <property type="entry name" value="Pept_M10A_Zn_BS"/>
</dbReference>
<dbReference type="InterPro" id="IPR006026">
    <property type="entry name" value="Peptidase_Metallo"/>
</dbReference>
<dbReference type="InterPro" id="IPR002477">
    <property type="entry name" value="Peptidoglycan-bd-like"/>
</dbReference>
<dbReference type="InterPro" id="IPR036365">
    <property type="entry name" value="PGBD-like_sf"/>
</dbReference>
<dbReference type="PANTHER" id="PTHR10201:SF151">
    <property type="entry name" value="INTERSTITIAL COLLAGENASE"/>
    <property type="match status" value="1"/>
</dbReference>
<dbReference type="PANTHER" id="PTHR10201">
    <property type="entry name" value="MATRIX METALLOPROTEINASE"/>
    <property type="match status" value="1"/>
</dbReference>
<dbReference type="Pfam" id="PF00045">
    <property type="entry name" value="Hemopexin"/>
    <property type="match status" value="4"/>
</dbReference>
<dbReference type="Pfam" id="PF00413">
    <property type="entry name" value="Peptidase_M10"/>
    <property type="match status" value="1"/>
</dbReference>
<dbReference type="Pfam" id="PF01471">
    <property type="entry name" value="PG_binding_1"/>
    <property type="match status" value="1"/>
</dbReference>
<dbReference type="PIRSF" id="PIRSF001191">
    <property type="entry name" value="Peptidase_M10A_matrix"/>
    <property type="match status" value="1"/>
</dbReference>
<dbReference type="PRINTS" id="PR00138">
    <property type="entry name" value="MATRIXIN"/>
</dbReference>
<dbReference type="SMART" id="SM00120">
    <property type="entry name" value="HX"/>
    <property type="match status" value="4"/>
</dbReference>
<dbReference type="SMART" id="SM00235">
    <property type="entry name" value="ZnMc"/>
    <property type="match status" value="1"/>
</dbReference>
<dbReference type="SUPFAM" id="SSF50923">
    <property type="entry name" value="Hemopexin-like domain"/>
    <property type="match status" value="1"/>
</dbReference>
<dbReference type="SUPFAM" id="SSF55486">
    <property type="entry name" value="Metalloproteases ('zincins'), catalytic domain"/>
    <property type="match status" value="1"/>
</dbReference>
<dbReference type="SUPFAM" id="SSF47090">
    <property type="entry name" value="PGBD-like"/>
    <property type="match status" value="1"/>
</dbReference>
<dbReference type="PROSITE" id="PS00546">
    <property type="entry name" value="CYSTEINE_SWITCH"/>
    <property type="match status" value="1"/>
</dbReference>
<dbReference type="PROSITE" id="PS00024">
    <property type="entry name" value="HEMOPEXIN"/>
    <property type="match status" value="1"/>
</dbReference>
<dbReference type="PROSITE" id="PS51642">
    <property type="entry name" value="HEMOPEXIN_2"/>
    <property type="match status" value="4"/>
</dbReference>
<dbReference type="PROSITE" id="PS00142">
    <property type="entry name" value="ZINC_PROTEASE"/>
    <property type="match status" value="1"/>
</dbReference>
<protein>
    <recommendedName>
        <fullName>Interstitial collagenase</fullName>
        <ecNumber>3.4.24.7</ecNumber>
    </recommendedName>
    <alternativeName>
        <fullName>Fibroblast collagenase</fullName>
    </alternativeName>
    <alternativeName>
        <fullName>Matrix metalloproteinase-1</fullName>
        <shortName>MMP-1</shortName>
    </alternativeName>
</protein>
<comment type="function">
    <text>Cleaves collagens of types I, II, and III at one site in the helical domain. Also cleaves collagens of types VII and X.</text>
</comment>
<comment type="catalytic activity">
    <reaction>
        <text>Cleavage of the triple helix of collagen at about three-quarters of the length of the molecule from the N-terminus, at 775-Gly-|-Ile-776 in the alpha1(I) chain. Cleaves synthetic substrates and alpha-macroglobulins at bonds where P1' is a hydrophobic residue.</text>
        <dbReference type="EC" id="3.4.24.7"/>
    </reaction>
</comment>
<comment type="cofactor">
    <cofactor evidence="1">
        <name>Ca(2+)</name>
        <dbReference type="ChEBI" id="CHEBI:29108"/>
    </cofactor>
    <text evidence="1">Binds 4 Ca(2+) ions per subunit.</text>
</comment>
<comment type="cofactor">
    <cofactor evidence="1">
        <name>Zn(2+)</name>
        <dbReference type="ChEBI" id="CHEBI:29105"/>
    </cofactor>
    <text evidence="1">Binds 2 Zn(2+) ions per subunit.</text>
</comment>
<comment type="activity regulation">
    <text>Can be activated without removal of the activation peptide.</text>
</comment>
<comment type="subcellular location">
    <subcellularLocation>
        <location evidence="1">Secreted</location>
        <location evidence="1">Extracellular space</location>
        <location evidence="1">Extracellular matrix</location>
    </subcellularLocation>
</comment>
<comment type="domain">
    <text>The conserved cysteine present in the cysteine-switch motif binds the catalytic zinc ion, thus inhibiting the enzyme. The dissociation of the cysteine from the zinc ion upon the activation-peptide release activates the enzyme.</text>
</comment>
<comment type="PTM">
    <text evidence="2">Tyrosine phosphorylated in platelets by PKDCC/VLK.</text>
</comment>
<comment type="similarity">
    <text evidence="6">Belongs to the peptidase M10A family.</text>
</comment>
<name>MMP1_BOVIN</name>
<feature type="signal peptide" evidence="5">
    <location>
        <begin position="1"/>
        <end position="18"/>
    </location>
</feature>
<feature type="propeptide" id="PRO_0000028699" description="Activation peptide">
    <location>
        <begin position="19"/>
        <end position="99"/>
    </location>
</feature>
<feature type="chain" id="PRO_0000028700" description="Interstitial collagenase">
    <location>
        <begin position="100"/>
        <end position="469"/>
    </location>
</feature>
<feature type="repeat" description="Hemopexin 1">
    <location>
        <begin position="275"/>
        <end position="324"/>
    </location>
</feature>
<feature type="repeat" description="Hemopexin 2">
    <location>
        <begin position="325"/>
        <end position="371"/>
    </location>
</feature>
<feature type="repeat" description="Hemopexin 3">
    <location>
        <begin position="374"/>
        <end position="422"/>
    </location>
</feature>
<feature type="repeat" description="Hemopexin 4">
    <location>
        <begin position="423"/>
        <end position="466"/>
    </location>
</feature>
<feature type="short sequence motif" description="Cysteine switch" evidence="1">
    <location>
        <begin position="90"/>
        <end position="97"/>
    </location>
</feature>
<feature type="active site" evidence="4">
    <location>
        <position position="219"/>
    </location>
</feature>
<feature type="binding site" description="in inhibited form" evidence="1">
    <location>
        <position position="92"/>
    </location>
    <ligand>
        <name>Zn(2+)</name>
        <dbReference type="ChEBI" id="CHEBI:29105"/>
        <label>2</label>
        <note>catalytic</note>
    </ligand>
</feature>
<feature type="binding site" evidence="1">
    <location>
        <position position="124"/>
    </location>
    <ligand>
        <name>Ca(2+)</name>
        <dbReference type="ChEBI" id="CHEBI:29108"/>
        <label>1</label>
    </ligand>
</feature>
<feature type="binding site" evidence="1">
    <location>
        <position position="158"/>
    </location>
    <ligand>
        <name>Ca(2+)</name>
        <dbReference type="ChEBI" id="CHEBI:29108"/>
        <label>2</label>
    </ligand>
</feature>
<feature type="binding site" evidence="1">
    <location>
        <position position="168"/>
    </location>
    <ligand>
        <name>Zn(2+)</name>
        <dbReference type="ChEBI" id="CHEBI:29105"/>
        <label>1</label>
    </ligand>
</feature>
<feature type="binding site" evidence="1">
    <location>
        <position position="170"/>
    </location>
    <ligand>
        <name>Zn(2+)</name>
        <dbReference type="ChEBI" id="CHEBI:29105"/>
        <label>1</label>
    </ligand>
</feature>
<feature type="binding site" evidence="1">
    <location>
        <position position="175"/>
    </location>
    <ligand>
        <name>Ca(2+)</name>
        <dbReference type="ChEBI" id="CHEBI:29108"/>
        <label>3</label>
    </ligand>
</feature>
<feature type="binding site" evidence="1">
    <location>
        <position position="176"/>
    </location>
    <ligand>
        <name>Ca(2+)</name>
        <dbReference type="ChEBI" id="CHEBI:29108"/>
        <label>3</label>
    </ligand>
</feature>
<feature type="binding site" evidence="1">
    <location>
        <position position="178"/>
    </location>
    <ligand>
        <name>Ca(2+)</name>
        <dbReference type="ChEBI" id="CHEBI:29108"/>
        <label>3</label>
    </ligand>
</feature>
<feature type="binding site" evidence="1">
    <location>
        <position position="180"/>
    </location>
    <ligand>
        <name>Ca(2+)</name>
        <dbReference type="ChEBI" id="CHEBI:29108"/>
        <label>3</label>
    </ligand>
</feature>
<feature type="binding site" evidence="1">
    <location>
        <position position="183"/>
    </location>
    <ligand>
        <name>Zn(2+)</name>
        <dbReference type="ChEBI" id="CHEBI:29105"/>
        <label>1</label>
    </ligand>
</feature>
<feature type="binding site" evidence="1">
    <location>
        <position position="190"/>
    </location>
    <ligand>
        <name>Ca(2+)</name>
        <dbReference type="ChEBI" id="CHEBI:29108"/>
        <label>2</label>
    </ligand>
</feature>
<feature type="binding site" evidence="1">
    <location>
        <position position="192"/>
    </location>
    <ligand>
        <name>Ca(2+)</name>
        <dbReference type="ChEBI" id="CHEBI:29108"/>
        <label>2</label>
    </ligand>
</feature>
<feature type="binding site" evidence="1">
    <location>
        <position position="194"/>
    </location>
    <ligand>
        <name>Ca(2+)</name>
        <dbReference type="ChEBI" id="CHEBI:29108"/>
        <label>2</label>
    </ligand>
</feature>
<feature type="binding site" evidence="1">
    <location>
        <position position="196"/>
    </location>
    <ligand>
        <name>Zn(2+)</name>
        <dbReference type="ChEBI" id="CHEBI:29105"/>
        <label>1</label>
    </ligand>
</feature>
<feature type="binding site" evidence="1">
    <location>
        <position position="198"/>
    </location>
    <ligand>
        <name>Ca(2+)</name>
        <dbReference type="ChEBI" id="CHEBI:29108"/>
        <label>3</label>
    </ligand>
</feature>
<feature type="binding site" evidence="1">
    <location>
        <position position="199"/>
    </location>
    <ligand>
        <name>Ca(2+)</name>
        <dbReference type="ChEBI" id="CHEBI:29108"/>
        <label>1</label>
    </ligand>
</feature>
<feature type="binding site" evidence="1">
    <location>
        <position position="201"/>
    </location>
    <ligand>
        <name>Ca(2+)</name>
        <dbReference type="ChEBI" id="CHEBI:29108"/>
        <label>3</label>
    </ligand>
</feature>
<feature type="binding site" evidence="1">
    <location>
        <position position="218"/>
    </location>
    <ligand>
        <name>Zn(2+)</name>
        <dbReference type="ChEBI" id="CHEBI:29105"/>
        <label>2</label>
        <note>catalytic</note>
    </ligand>
</feature>
<feature type="binding site" evidence="1">
    <location>
        <position position="222"/>
    </location>
    <ligand>
        <name>Zn(2+)</name>
        <dbReference type="ChEBI" id="CHEBI:29105"/>
        <label>2</label>
        <note>catalytic</note>
    </ligand>
</feature>
<feature type="binding site" evidence="1">
    <location>
        <position position="228"/>
    </location>
    <ligand>
        <name>Zn(2+)</name>
        <dbReference type="ChEBI" id="CHEBI:29105"/>
        <label>2</label>
        <note>catalytic</note>
    </ligand>
</feature>
<feature type="binding site" evidence="1">
    <location>
        <position position="285"/>
    </location>
    <ligand>
        <name>Ca(2+)</name>
        <dbReference type="ChEBI" id="CHEBI:29108"/>
        <label>4</label>
    </ligand>
</feature>
<feature type="binding site" evidence="1">
    <location>
        <position position="329"/>
    </location>
    <ligand>
        <name>Ca(2+)</name>
        <dbReference type="ChEBI" id="CHEBI:29108"/>
        <label>4</label>
    </ligand>
</feature>
<feature type="binding site" evidence="1">
    <location>
        <position position="378"/>
    </location>
    <ligand>
        <name>Ca(2+)</name>
        <dbReference type="ChEBI" id="CHEBI:29108"/>
        <label>4</label>
    </ligand>
</feature>
<feature type="binding site" evidence="1">
    <location>
        <position position="427"/>
    </location>
    <ligand>
        <name>Ca(2+)</name>
        <dbReference type="ChEBI" id="CHEBI:29108"/>
        <label>4</label>
    </ligand>
</feature>
<feature type="modified residue" description="Phosphothreonine" evidence="2">
    <location>
        <position position="274"/>
    </location>
</feature>
<feature type="modified residue" description="Phosphotyrosine; by PKDCC" evidence="2">
    <location>
        <position position="360"/>
    </location>
</feature>
<feature type="glycosylation site" description="N-linked (GlcNAc...) asparagine" evidence="3">
    <location>
        <position position="120"/>
    </location>
</feature>
<feature type="disulfide bond" evidence="1">
    <location>
        <begin position="278"/>
        <end position="466"/>
    </location>
</feature>
<feature type="sequence conflict" description="In Ref. 2; AA sequence." evidence="6" ref="2">
    <original>AT</original>
    <variation>FP</variation>
    <location>
        <begin position="22"/>
        <end position="23"/>
    </location>
</feature>
<feature type="sequence conflict" description="In Ref. 2; AA sequence." evidence="6" ref="2">
    <original>D</original>
    <variation>L</variation>
    <location>
        <position position="30"/>
    </location>
</feature>
<feature type="sequence conflict" description="In Ref. 2; AA sequence." evidence="6" ref="2">
    <original>KK</original>
    <variation>LL</variation>
    <location>
        <begin position="35"/>
        <end position="36"/>
    </location>
</feature>
<feature type="sequence conflict" description="In Ref. 2; AA sequence." evidence="6" ref="2">
    <original>N</original>
    <variation>F</variation>
    <location>
        <position position="85"/>
    </location>
</feature>
<feature type="sequence conflict" description="In Ref. 2; AA sequence." evidence="6" ref="2">
    <original>KSC</original>
    <variation>NPR</variation>
    <location>
        <begin position="106"/>
        <end position="108"/>
    </location>
</feature>
<feature type="sequence conflict" description="In Ref. 2; AA sequence." evidence="6" ref="2">
    <original>N</original>
    <variation>D</variation>
    <location>
        <position position="113"/>
    </location>
</feature>
<proteinExistence type="evidence at protein level"/>
<gene>
    <name type="primary">MMP1</name>
    <name type="synonym">CLG</name>
</gene>
<reference key="1">
    <citation type="journal article" date="1994" name="DNA Seq.">
        <title>Primary structure of bovine interstitial collagenase deduced from cDNA sequence.</title>
        <authorList>
            <person name="Tamura M."/>
            <person name="Shimokawa H."/>
            <person name="Sasaki S."/>
        </authorList>
    </citation>
    <scope>NUCLEOTIDE SEQUENCE [MRNA]</scope>
    <source>
        <tissue>Periodontium fibroblast</tissue>
    </source>
</reference>
<reference key="2">
    <citation type="journal article" date="1992" name="Arch. Biochem. Biophys.">
        <title>Purification and characterization of bovine interstitial collagenase and tissue inhibitor of metalloproteinases.</title>
        <authorList>
            <person name="Sudbeck B.D."/>
            <person name="Jeffrey J.J."/>
            <person name="Welgus H.G."/>
            <person name="Mecham R.P."/>
            <person name="McCourt D."/>
            <person name="Parks W.C."/>
        </authorList>
    </citation>
    <scope>PROTEIN SEQUENCE OF 19-39 AND 85-125</scope>
</reference>
<keyword id="KW-0106">Calcium</keyword>
<keyword id="KW-0177">Collagen degradation</keyword>
<keyword id="KW-0903">Direct protein sequencing</keyword>
<keyword id="KW-1015">Disulfide bond</keyword>
<keyword id="KW-0272">Extracellular matrix</keyword>
<keyword id="KW-0325">Glycoprotein</keyword>
<keyword id="KW-0378">Hydrolase</keyword>
<keyword id="KW-0479">Metal-binding</keyword>
<keyword id="KW-0482">Metalloprotease</keyword>
<keyword id="KW-0597">Phosphoprotein</keyword>
<keyword id="KW-0645">Protease</keyword>
<keyword id="KW-1185">Reference proteome</keyword>
<keyword id="KW-0677">Repeat</keyword>
<keyword id="KW-0964">Secreted</keyword>
<keyword id="KW-0732">Signal</keyword>
<keyword id="KW-0862">Zinc</keyword>
<keyword id="KW-0865">Zymogen</keyword>
<organism>
    <name type="scientific">Bos taurus</name>
    <name type="common">Bovine</name>
    <dbReference type="NCBI Taxonomy" id="9913"/>
    <lineage>
        <taxon>Eukaryota</taxon>
        <taxon>Metazoa</taxon>
        <taxon>Chordata</taxon>
        <taxon>Craniata</taxon>
        <taxon>Vertebrata</taxon>
        <taxon>Euteleostomi</taxon>
        <taxon>Mammalia</taxon>
        <taxon>Eutheria</taxon>
        <taxon>Laurasiatheria</taxon>
        <taxon>Artiodactyla</taxon>
        <taxon>Ruminantia</taxon>
        <taxon>Pecora</taxon>
        <taxon>Bovidae</taxon>
        <taxon>Bovinae</taxon>
        <taxon>Bos</taxon>
    </lineage>
</organism>
<sequence length="469" mass="53354">MPRLPLLLLLLWGTGSHGFPAATSETQEQDVETVKKYLENYYNLNSNGKKVERQRNGGLITEKLKQMQKFFGLRVTGKPDAETLNVMKQPRCGVPDVAPFVLTPGKSCWENTNLTYRIENYTPDLSRADVDQAIEKAFQLWSNVTPLTFTKVSEGQADIMISFVRGDHRDNSPFDGPGGNLAHAFQPGAGIGGDAHFDDDEWWTSNFQDYNLYRVAAHEFGHSLGLAHSTDIGALMYPSYTFSGDVQLSQDDIDGIQAIYGPSQNPTQPVGPQTPEVCDSKLTFDAITTIRGEVMFFKDRFYMRTNPLYPEVELNFISVFWPQLPNGLQAAYEVADRDEVRFFKGNKYWAVKGQDVLRGYPRDIYRSFGFPRTVKSIDAAVSEEDTGKTYFFVANKCWRYDEYKQSMDAGYPKMIAEDFPGIGNKVDAVFQKGGFFYFFHGRRQYKFDPQTKRILTLLKANSWFNCRKN</sequence>
<evidence type="ECO:0000250" key="1"/>
<evidence type="ECO:0000250" key="2">
    <source>
        <dbReference type="UniProtKB" id="P03956"/>
    </source>
</evidence>
<evidence type="ECO:0000255" key="3"/>
<evidence type="ECO:0000255" key="4">
    <source>
        <dbReference type="PROSITE-ProRule" id="PRU10095"/>
    </source>
</evidence>
<evidence type="ECO:0000269" key="5">
    <source>
    </source>
</evidence>
<evidence type="ECO:0000305" key="6"/>
<accession>P28053</accession>